<sequence>MALRLEDKKAIVAEVNEAAKGALSAVVADSRGVTVGAMTVLRKAARANGVYVRVVRNTLAKRAVEGTAFECLAETFTGPTLIAFSNEHPGAAARLLKDFAKGNAKFEVKGAAFEGMFIPAVDIDRLAKLPTYDEALAQLMMTMKEASAGKFVRTLAALRDQKQEAA</sequence>
<organism>
    <name type="scientific">Shewanella denitrificans (strain OS217 / ATCC BAA-1090 / DSM 15013)</name>
    <dbReference type="NCBI Taxonomy" id="318161"/>
    <lineage>
        <taxon>Bacteria</taxon>
        <taxon>Pseudomonadati</taxon>
        <taxon>Pseudomonadota</taxon>
        <taxon>Gammaproteobacteria</taxon>
        <taxon>Alteromonadales</taxon>
        <taxon>Shewanellaceae</taxon>
        <taxon>Shewanella</taxon>
    </lineage>
</organism>
<evidence type="ECO:0000255" key="1">
    <source>
        <dbReference type="HAMAP-Rule" id="MF_00362"/>
    </source>
</evidence>
<evidence type="ECO:0000305" key="2"/>
<proteinExistence type="inferred from homology"/>
<gene>
    <name evidence="1" type="primary">rplJ</name>
    <name type="ordered locus">Sden_0161</name>
</gene>
<protein>
    <recommendedName>
        <fullName evidence="1">Large ribosomal subunit protein uL10</fullName>
    </recommendedName>
    <alternativeName>
        <fullName evidence="2">50S ribosomal protein L10</fullName>
    </alternativeName>
</protein>
<comment type="function">
    <text evidence="1">Forms part of the ribosomal stalk, playing a central role in the interaction of the ribosome with GTP-bound translation factors.</text>
</comment>
<comment type="subunit">
    <text evidence="1">Part of the ribosomal stalk of the 50S ribosomal subunit. The N-terminus interacts with L11 and the large rRNA to form the base of the stalk. The C-terminus forms an elongated spine to which L12 dimers bind in a sequential fashion forming a multimeric L10(L12)X complex.</text>
</comment>
<comment type="similarity">
    <text evidence="1">Belongs to the universal ribosomal protein uL10 family.</text>
</comment>
<accession>Q12SW8</accession>
<reference key="1">
    <citation type="submission" date="2006-03" db="EMBL/GenBank/DDBJ databases">
        <title>Complete sequence of Shewanella denitrificans OS217.</title>
        <authorList>
            <consortium name="US DOE Joint Genome Institute"/>
            <person name="Copeland A."/>
            <person name="Lucas S."/>
            <person name="Lapidus A."/>
            <person name="Barry K."/>
            <person name="Detter J.C."/>
            <person name="Glavina del Rio T."/>
            <person name="Hammon N."/>
            <person name="Israni S."/>
            <person name="Dalin E."/>
            <person name="Tice H."/>
            <person name="Pitluck S."/>
            <person name="Brettin T."/>
            <person name="Bruce D."/>
            <person name="Han C."/>
            <person name="Tapia R."/>
            <person name="Gilna P."/>
            <person name="Kiss H."/>
            <person name="Schmutz J."/>
            <person name="Larimer F."/>
            <person name="Land M."/>
            <person name="Hauser L."/>
            <person name="Kyrpides N."/>
            <person name="Lykidis A."/>
            <person name="Richardson P."/>
        </authorList>
    </citation>
    <scope>NUCLEOTIDE SEQUENCE [LARGE SCALE GENOMIC DNA]</scope>
    <source>
        <strain>OS217 / ATCC BAA-1090 / DSM 15013</strain>
    </source>
</reference>
<feature type="chain" id="PRO_1000005590" description="Large ribosomal subunit protein uL10">
    <location>
        <begin position="1"/>
        <end position="166"/>
    </location>
</feature>
<name>RL10_SHEDO</name>
<dbReference type="EMBL" id="CP000302">
    <property type="protein sequence ID" value="ABE53458.1"/>
    <property type="molecule type" value="Genomic_DNA"/>
</dbReference>
<dbReference type="RefSeq" id="WP_011494627.1">
    <property type="nucleotide sequence ID" value="NC_007954.1"/>
</dbReference>
<dbReference type="STRING" id="318161.Sden_0161"/>
<dbReference type="KEGG" id="sdn:Sden_0161"/>
<dbReference type="eggNOG" id="COG0244">
    <property type="taxonomic scope" value="Bacteria"/>
</dbReference>
<dbReference type="HOGENOM" id="CLU_092227_0_2_6"/>
<dbReference type="OrthoDB" id="9808307at2"/>
<dbReference type="Proteomes" id="UP000001982">
    <property type="component" value="Chromosome"/>
</dbReference>
<dbReference type="GO" id="GO:0015934">
    <property type="term" value="C:large ribosomal subunit"/>
    <property type="evidence" value="ECO:0007669"/>
    <property type="project" value="InterPro"/>
</dbReference>
<dbReference type="GO" id="GO:0070180">
    <property type="term" value="F:large ribosomal subunit rRNA binding"/>
    <property type="evidence" value="ECO:0007669"/>
    <property type="project" value="UniProtKB-UniRule"/>
</dbReference>
<dbReference type="GO" id="GO:0003735">
    <property type="term" value="F:structural constituent of ribosome"/>
    <property type="evidence" value="ECO:0007669"/>
    <property type="project" value="InterPro"/>
</dbReference>
<dbReference type="GO" id="GO:0006412">
    <property type="term" value="P:translation"/>
    <property type="evidence" value="ECO:0007669"/>
    <property type="project" value="UniProtKB-UniRule"/>
</dbReference>
<dbReference type="CDD" id="cd05797">
    <property type="entry name" value="Ribosomal_L10"/>
    <property type="match status" value="1"/>
</dbReference>
<dbReference type="FunFam" id="3.30.70.1730:FF:000001">
    <property type="entry name" value="50S ribosomal protein L10"/>
    <property type="match status" value="1"/>
</dbReference>
<dbReference type="Gene3D" id="3.30.70.1730">
    <property type="match status" value="1"/>
</dbReference>
<dbReference type="Gene3D" id="6.10.250.2350">
    <property type="match status" value="1"/>
</dbReference>
<dbReference type="HAMAP" id="MF_00362">
    <property type="entry name" value="Ribosomal_uL10"/>
    <property type="match status" value="1"/>
</dbReference>
<dbReference type="InterPro" id="IPR001790">
    <property type="entry name" value="Ribosomal_uL10"/>
</dbReference>
<dbReference type="InterPro" id="IPR043141">
    <property type="entry name" value="Ribosomal_uL10-like_sf"/>
</dbReference>
<dbReference type="InterPro" id="IPR022973">
    <property type="entry name" value="Ribosomal_uL10_bac"/>
</dbReference>
<dbReference type="InterPro" id="IPR047865">
    <property type="entry name" value="Ribosomal_uL10_bac_type"/>
</dbReference>
<dbReference type="InterPro" id="IPR002363">
    <property type="entry name" value="Ribosomal_uL10_CS_bac"/>
</dbReference>
<dbReference type="NCBIfam" id="NF000955">
    <property type="entry name" value="PRK00099.1-1"/>
    <property type="match status" value="1"/>
</dbReference>
<dbReference type="PANTHER" id="PTHR11560">
    <property type="entry name" value="39S RIBOSOMAL PROTEIN L10, MITOCHONDRIAL"/>
    <property type="match status" value="1"/>
</dbReference>
<dbReference type="Pfam" id="PF00466">
    <property type="entry name" value="Ribosomal_L10"/>
    <property type="match status" value="1"/>
</dbReference>
<dbReference type="SUPFAM" id="SSF160369">
    <property type="entry name" value="Ribosomal protein L10-like"/>
    <property type="match status" value="1"/>
</dbReference>
<dbReference type="PROSITE" id="PS01109">
    <property type="entry name" value="RIBOSOMAL_L10"/>
    <property type="match status" value="1"/>
</dbReference>
<keyword id="KW-1185">Reference proteome</keyword>
<keyword id="KW-0687">Ribonucleoprotein</keyword>
<keyword id="KW-0689">Ribosomal protein</keyword>
<keyword id="KW-0694">RNA-binding</keyword>
<keyword id="KW-0699">rRNA-binding</keyword>